<comment type="function">
    <text evidence="1">Essential cell division protein that forms a contractile ring structure (Z ring) at the future cell division site. The regulation of the ring assembly controls the timing and the location of cell division. One of the functions of the FtsZ ring is to recruit other cell division proteins to the septum to produce a new cell wall between the dividing cells. Binds GTP and shows GTPase activity.</text>
</comment>
<comment type="subunit">
    <text evidence="1">Homodimer. Polymerizes to form a dynamic ring structure in a strictly GTP-dependent manner. Interacts directly with several other division proteins.</text>
</comment>
<comment type="subcellular location">
    <subcellularLocation>
        <location evidence="1">Cytoplasm</location>
    </subcellularLocation>
    <text evidence="1">Assembles at midcell at the inner surface of the cytoplasmic membrane.</text>
</comment>
<comment type="similarity">
    <text evidence="1">Belongs to the FtsZ family.</text>
</comment>
<keyword id="KW-0131">Cell cycle</keyword>
<keyword id="KW-0132">Cell division</keyword>
<keyword id="KW-0963">Cytoplasm</keyword>
<keyword id="KW-0342">GTP-binding</keyword>
<keyword id="KW-0547">Nucleotide-binding</keyword>
<keyword id="KW-1185">Reference proteome</keyword>
<keyword id="KW-0717">Septation</keyword>
<sequence length="368" mass="39635">MFMKSIVEEALARAEREKKERIEGRGFEDVEDEILQVLHELKTVIKVIGVGGGGCNTITRMYEEGIEGAELIALNTDVQHLYYTKANRRILIGKRRTRGLGAGSLPQVGEEAARESEDEIKKLVEGSDMVFVTCGLGGGTGTGAAPVVAEAAQEAGALTIAVVTFPFSAEGAVRRANAEAGLERLREVADTVIVIPNDRLLEVVPNYPMQLAFKVADEILMRAVKGITELITKPALINLDFADVRTVMEKGGVAMIGLGEASGEDKAAESVRKALKSPLLDVDVSGAKAALVNVTGGPDMTIEEAESVIEEIYSKVDPDARIIWGAMIDPELENTMRTLIIVTGVKSPQILGRKGYPVTRKYGIDFVR</sequence>
<gene>
    <name evidence="1" type="primary">ftsZ1</name>
    <name type="ordered locus">AF_0535</name>
</gene>
<dbReference type="EMBL" id="AE000782">
    <property type="protein sequence ID" value="AAB90699.1"/>
    <property type="molecule type" value="Genomic_DNA"/>
</dbReference>
<dbReference type="PIR" id="G69316">
    <property type="entry name" value="G69316"/>
</dbReference>
<dbReference type="SMR" id="O29715"/>
<dbReference type="STRING" id="224325.AF_0535"/>
<dbReference type="PaxDb" id="224325-AF_0535"/>
<dbReference type="EnsemblBacteria" id="AAB90699">
    <property type="protein sequence ID" value="AAB90699"/>
    <property type="gene ID" value="AF_0535"/>
</dbReference>
<dbReference type="KEGG" id="afu:AF_0535"/>
<dbReference type="eggNOG" id="arCOG02201">
    <property type="taxonomic scope" value="Archaea"/>
</dbReference>
<dbReference type="HOGENOM" id="CLU_024865_0_1_2"/>
<dbReference type="PhylomeDB" id="O29715"/>
<dbReference type="Proteomes" id="UP000002199">
    <property type="component" value="Chromosome"/>
</dbReference>
<dbReference type="GO" id="GO:0032153">
    <property type="term" value="C:cell division site"/>
    <property type="evidence" value="ECO:0007669"/>
    <property type="project" value="UniProtKB-UniRule"/>
</dbReference>
<dbReference type="GO" id="GO:0005737">
    <property type="term" value="C:cytoplasm"/>
    <property type="evidence" value="ECO:0007669"/>
    <property type="project" value="UniProtKB-SubCell"/>
</dbReference>
<dbReference type="GO" id="GO:0005525">
    <property type="term" value="F:GTP binding"/>
    <property type="evidence" value="ECO:0007669"/>
    <property type="project" value="UniProtKB-UniRule"/>
</dbReference>
<dbReference type="GO" id="GO:0003924">
    <property type="term" value="F:GTPase activity"/>
    <property type="evidence" value="ECO:0007669"/>
    <property type="project" value="UniProtKB-UniRule"/>
</dbReference>
<dbReference type="GO" id="GO:0043093">
    <property type="term" value="P:FtsZ-dependent cytokinesis"/>
    <property type="evidence" value="ECO:0007669"/>
    <property type="project" value="UniProtKB-UniRule"/>
</dbReference>
<dbReference type="GO" id="GO:0051258">
    <property type="term" value="P:protein polymerization"/>
    <property type="evidence" value="ECO:0007669"/>
    <property type="project" value="UniProtKB-UniRule"/>
</dbReference>
<dbReference type="CDD" id="cd02201">
    <property type="entry name" value="FtsZ_type1"/>
    <property type="match status" value="1"/>
</dbReference>
<dbReference type="FunFam" id="3.40.50.1440:FF:000023">
    <property type="entry name" value="Cell division protein FtsZ"/>
    <property type="match status" value="1"/>
</dbReference>
<dbReference type="Gene3D" id="3.40.50.1440">
    <property type="entry name" value="Tubulin/FtsZ, GTPase domain"/>
    <property type="match status" value="1"/>
</dbReference>
<dbReference type="HAMAP" id="MF_00909">
    <property type="entry name" value="FtsZ"/>
    <property type="match status" value="1"/>
</dbReference>
<dbReference type="InterPro" id="IPR000158">
    <property type="entry name" value="Cell_div_FtsZ"/>
</dbReference>
<dbReference type="InterPro" id="IPR020805">
    <property type="entry name" value="Cell_div_FtsZ_CS"/>
</dbReference>
<dbReference type="InterPro" id="IPR045061">
    <property type="entry name" value="FtsZ/CetZ"/>
</dbReference>
<dbReference type="InterPro" id="IPR024757">
    <property type="entry name" value="FtsZ_C"/>
</dbReference>
<dbReference type="InterPro" id="IPR008280">
    <property type="entry name" value="Tub_FtsZ_C"/>
</dbReference>
<dbReference type="InterPro" id="IPR018316">
    <property type="entry name" value="Tubulin/FtsZ_2-layer-sand-dom"/>
</dbReference>
<dbReference type="InterPro" id="IPR036525">
    <property type="entry name" value="Tubulin/FtsZ_GTPase_sf"/>
</dbReference>
<dbReference type="InterPro" id="IPR003008">
    <property type="entry name" value="Tubulin_FtsZ_GTPase"/>
</dbReference>
<dbReference type="NCBIfam" id="TIGR00065">
    <property type="entry name" value="ftsZ"/>
    <property type="match status" value="1"/>
</dbReference>
<dbReference type="PANTHER" id="PTHR30314">
    <property type="entry name" value="CELL DIVISION PROTEIN FTSZ-RELATED"/>
    <property type="match status" value="1"/>
</dbReference>
<dbReference type="PANTHER" id="PTHR30314:SF3">
    <property type="entry name" value="MITOCHONDRIAL DIVISION PROTEIN FSZA"/>
    <property type="match status" value="1"/>
</dbReference>
<dbReference type="Pfam" id="PF12327">
    <property type="entry name" value="FtsZ_C"/>
    <property type="match status" value="1"/>
</dbReference>
<dbReference type="Pfam" id="PF00091">
    <property type="entry name" value="Tubulin"/>
    <property type="match status" value="1"/>
</dbReference>
<dbReference type="PRINTS" id="PR00423">
    <property type="entry name" value="CELLDVISFTSZ"/>
</dbReference>
<dbReference type="SMART" id="SM00864">
    <property type="entry name" value="Tubulin"/>
    <property type="match status" value="1"/>
</dbReference>
<dbReference type="SMART" id="SM00865">
    <property type="entry name" value="Tubulin_C"/>
    <property type="match status" value="1"/>
</dbReference>
<dbReference type="SUPFAM" id="SSF55307">
    <property type="entry name" value="Tubulin C-terminal domain-like"/>
    <property type="match status" value="1"/>
</dbReference>
<dbReference type="SUPFAM" id="SSF52490">
    <property type="entry name" value="Tubulin nucleotide-binding domain-like"/>
    <property type="match status" value="1"/>
</dbReference>
<dbReference type="PROSITE" id="PS01134">
    <property type="entry name" value="FTSZ_1"/>
    <property type="match status" value="1"/>
</dbReference>
<dbReference type="PROSITE" id="PS01135">
    <property type="entry name" value="FTSZ_2"/>
    <property type="match status" value="1"/>
</dbReference>
<reference key="1">
    <citation type="journal article" date="1997" name="Nature">
        <title>The complete genome sequence of the hyperthermophilic, sulphate-reducing archaeon Archaeoglobus fulgidus.</title>
        <authorList>
            <person name="Klenk H.-P."/>
            <person name="Clayton R.A."/>
            <person name="Tomb J.-F."/>
            <person name="White O."/>
            <person name="Nelson K.E."/>
            <person name="Ketchum K.A."/>
            <person name="Dodson R.J."/>
            <person name="Gwinn M.L."/>
            <person name="Hickey E.K."/>
            <person name="Peterson J.D."/>
            <person name="Richardson D.L."/>
            <person name="Kerlavage A.R."/>
            <person name="Graham D.E."/>
            <person name="Kyrpides N.C."/>
            <person name="Fleischmann R.D."/>
            <person name="Quackenbush J."/>
            <person name="Lee N.H."/>
            <person name="Sutton G.G."/>
            <person name="Gill S.R."/>
            <person name="Kirkness E.F."/>
            <person name="Dougherty B.A."/>
            <person name="McKenney K."/>
            <person name="Adams M.D."/>
            <person name="Loftus B.J."/>
            <person name="Peterson S.N."/>
            <person name="Reich C.I."/>
            <person name="McNeil L.K."/>
            <person name="Badger J.H."/>
            <person name="Glodek A."/>
            <person name="Zhou L."/>
            <person name="Overbeek R."/>
            <person name="Gocayne J.D."/>
            <person name="Weidman J.F."/>
            <person name="McDonald L.A."/>
            <person name="Utterback T.R."/>
            <person name="Cotton M.D."/>
            <person name="Spriggs T."/>
            <person name="Artiach P."/>
            <person name="Kaine B.P."/>
            <person name="Sykes S.M."/>
            <person name="Sadow P.W."/>
            <person name="D'Andrea K.P."/>
            <person name="Bowman C."/>
            <person name="Fujii C."/>
            <person name="Garland S.A."/>
            <person name="Mason T.M."/>
            <person name="Olsen G.J."/>
            <person name="Fraser C.M."/>
            <person name="Smith H.O."/>
            <person name="Woese C.R."/>
            <person name="Venter J.C."/>
        </authorList>
    </citation>
    <scope>NUCLEOTIDE SEQUENCE [LARGE SCALE GENOMIC DNA]</scope>
    <source>
        <strain>ATCC 49558 / DSM 4304 / JCM 9628 / NBRC 100126 / VC-16</strain>
    </source>
</reference>
<evidence type="ECO:0000255" key="1">
    <source>
        <dbReference type="HAMAP-Rule" id="MF_00909"/>
    </source>
</evidence>
<proteinExistence type="inferred from homology"/>
<name>FTSZ1_ARCFU</name>
<protein>
    <recommendedName>
        <fullName evidence="1">Cell division protein FtsZ 1</fullName>
    </recommendedName>
</protein>
<organism>
    <name type="scientific">Archaeoglobus fulgidus (strain ATCC 49558 / DSM 4304 / JCM 9628 / NBRC 100126 / VC-16)</name>
    <dbReference type="NCBI Taxonomy" id="224325"/>
    <lineage>
        <taxon>Archaea</taxon>
        <taxon>Methanobacteriati</taxon>
        <taxon>Methanobacteriota</taxon>
        <taxon>Archaeoglobi</taxon>
        <taxon>Archaeoglobales</taxon>
        <taxon>Archaeoglobaceae</taxon>
        <taxon>Archaeoglobus</taxon>
    </lineage>
</organism>
<feature type="chain" id="PRO_0000114396" description="Cell division protein FtsZ 1">
    <location>
        <begin position="1"/>
        <end position="368"/>
    </location>
</feature>
<feature type="binding site" evidence="1">
    <location>
        <begin position="52"/>
        <end position="56"/>
    </location>
    <ligand>
        <name>GTP</name>
        <dbReference type="ChEBI" id="CHEBI:37565"/>
    </ligand>
</feature>
<feature type="binding site" evidence="1">
    <location>
        <begin position="139"/>
        <end position="141"/>
    </location>
    <ligand>
        <name>GTP</name>
        <dbReference type="ChEBI" id="CHEBI:37565"/>
    </ligand>
</feature>
<feature type="binding site" evidence="1">
    <location>
        <position position="170"/>
    </location>
    <ligand>
        <name>GTP</name>
        <dbReference type="ChEBI" id="CHEBI:37565"/>
    </ligand>
</feature>
<feature type="binding site" evidence="1">
    <location>
        <position position="174"/>
    </location>
    <ligand>
        <name>GTP</name>
        <dbReference type="ChEBI" id="CHEBI:37565"/>
    </ligand>
</feature>
<feature type="binding site" evidence="1">
    <location>
        <position position="217"/>
    </location>
    <ligand>
        <name>GTP</name>
        <dbReference type="ChEBI" id="CHEBI:37565"/>
    </ligand>
</feature>
<accession>O29715</accession>